<gene>
    <name type="primary">srp</name>
    <name type="synonym">ABF</name>
    <name type="ORF">CG3992</name>
</gene>
<accession>P52172</accession>
<accession>Q6NMW1</accession>
<accession>Q7K0H5</accession>
<accession>Q8INC6</accession>
<accession>Q94884</accession>
<accession>Q9VF01</accession>
<evidence type="ECO:0000255" key="1">
    <source>
        <dbReference type="PROSITE-ProRule" id="PRU00094"/>
    </source>
</evidence>
<evidence type="ECO:0000256" key="2">
    <source>
        <dbReference type="SAM" id="MobiDB-lite"/>
    </source>
</evidence>
<evidence type="ECO:0000269" key="3">
    <source>
    </source>
</evidence>
<evidence type="ECO:0000269" key="4">
    <source>
    </source>
</evidence>
<evidence type="ECO:0000303" key="5">
    <source ref="3"/>
</evidence>
<evidence type="ECO:0000305" key="6"/>
<protein>
    <recommendedName>
        <fullName>Box A-binding factor</fullName>
        <shortName>ABF</shortName>
    </recommendedName>
    <alternativeName>
        <fullName>GATA-binding factor B</fullName>
    </alternativeName>
    <alternativeName>
        <fullName>Protein serpent</fullName>
    </alternativeName>
    <alternativeName>
        <fullName>Transcription factor GATA-B</fullName>
    </alternativeName>
    <alternativeName>
        <fullName>dGATA-B</fullName>
    </alternativeName>
</protein>
<organism>
    <name type="scientific">Drosophila melanogaster</name>
    <name type="common">Fruit fly</name>
    <dbReference type="NCBI Taxonomy" id="7227"/>
    <lineage>
        <taxon>Eukaryota</taxon>
        <taxon>Metazoa</taxon>
        <taxon>Ecdysozoa</taxon>
        <taxon>Arthropoda</taxon>
        <taxon>Hexapoda</taxon>
        <taxon>Insecta</taxon>
        <taxon>Pterygota</taxon>
        <taxon>Neoptera</taxon>
        <taxon>Endopterygota</taxon>
        <taxon>Diptera</taxon>
        <taxon>Brachycera</taxon>
        <taxon>Muscomorpha</taxon>
        <taxon>Ephydroidea</taxon>
        <taxon>Drosophilidae</taxon>
        <taxon>Drosophila</taxon>
        <taxon>Sophophora</taxon>
    </lineage>
</organism>
<name>SRP_DROME</name>
<proteinExistence type="evidence at protein level"/>
<keyword id="KW-0010">Activator</keyword>
<keyword id="KW-0025">Alternative splicing</keyword>
<keyword id="KW-0217">Developmental protein</keyword>
<keyword id="KW-0238">DNA-binding</keyword>
<keyword id="KW-0479">Metal-binding</keyword>
<keyword id="KW-0539">Nucleus</keyword>
<keyword id="KW-0597">Phosphoprotein</keyword>
<keyword id="KW-1185">Reference proteome</keyword>
<keyword id="KW-0804">Transcription</keyword>
<keyword id="KW-0805">Transcription regulation</keyword>
<keyword id="KW-0862">Zinc</keyword>
<keyword id="KW-0863">Zinc-finger</keyword>
<dbReference type="EMBL" id="AE014297">
    <property type="protein sequence ID" value="AAF55261.2"/>
    <property type="molecule type" value="Genomic_DNA"/>
</dbReference>
<dbReference type="EMBL" id="AE014297">
    <property type="protein sequence ID" value="AAN13691.1"/>
    <property type="molecule type" value="Genomic_DNA"/>
</dbReference>
<dbReference type="EMBL" id="BT011543">
    <property type="protein sequence ID" value="AAS15679.1"/>
    <property type="molecule type" value="mRNA"/>
</dbReference>
<dbReference type="EMBL" id="Y07662">
    <property type="protein sequence ID" value="CAA68943.1"/>
    <property type="status" value="ALT_FRAME"/>
    <property type="molecule type" value="mRNA"/>
</dbReference>
<dbReference type="EMBL" id="AY069823">
    <property type="protein sequence ID" value="AAL39968.1"/>
    <property type="status" value="ALT_INIT"/>
    <property type="molecule type" value="mRNA"/>
</dbReference>
<dbReference type="EMBL" id="X76217">
    <property type="protein sequence ID" value="CAA53807.1"/>
    <property type="status" value="ALT_FRAME"/>
    <property type="molecule type" value="mRNA"/>
</dbReference>
<dbReference type="PIR" id="S40382">
    <property type="entry name" value="S40382"/>
</dbReference>
<dbReference type="RefSeq" id="NP_001027190.1">
    <molecule id="P52172-3"/>
    <property type="nucleotide sequence ID" value="NM_001032019.3"/>
</dbReference>
<dbReference type="RefSeq" id="NP_001262618.1">
    <molecule id="P52172-3"/>
    <property type="nucleotide sequence ID" value="NM_001275689.1"/>
</dbReference>
<dbReference type="RefSeq" id="NP_732098.1">
    <molecule id="P52172-2"/>
    <property type="nucleotide sequence ID" value="NM_169694.3"/>
</dbReference>
<dbReference type="RefSeq" id="NP_732100.2">
    <molecule id="P52172-1"/>
    <property type="nucleotide sequence ID" value="NM_169696.3"/>
</dbReference>
<dbReference type="SMR" id="P52172"/>
<dbReference type="BioGRID" id="66998">
    <property type="interactions" value="23"/>
</dbReference>
<dbReference type="FunCoup" id="P52172">
    <property type="interactions" value="232"/>
</dbReference>
<dbReference type="IntAct" id="P52172">
    <property type="interactions" value="2"/>
</dbReference>
<dbReference type="STRING" id="7227.FBpp0082669"/>
<dbReference type="GlyGen" id="P52172">
    <property type="glycosylation" value="2 sites"/>
</dbReference>
<dbReference type="iPTMnet" id="P52172"/>
<dbReference type="PaxDb" id="7227-FBpp0082669"/>
<dbReference type="DNASU" id="41944"/>
<dbReference type="EnsemblMetazoa" id="FBtr0083215">
    <molecule id="P52172-1"/>
    <property type="protein sequence ID" value="FBpp0082669"/>
    <property type="gene ID" value="FBgn0003507"/>
</dbReference>
<dbReference type="EnsemblMetazoa" id="FBtr0083216">
    <molecule id="P52172-2"/>
    <property type="protein sequence ID" value="FBpp0082670"/>
    <property type="gene ID" value="FBgn0003507"/>
</dbReference>
<dbReference type="EnsemblMetazoa" id="FBtr0100595">
    <molecule id="P52172-3"/>
    <property type="protein sequence ID" value="FBpp0100052"/>
    <property type="gene ID" value="FBgn0003507"/>
</dbReference>
<dbReference type="EnsemblMetazoa" id="FBtr0335423">
    <molecule id="P52172-3"/>
    <property type="protein sequence ID" value="FBpp0307406"/>
    <property type="gene ID" value="FBgn0003507"/>
</dbReference>
<dbReference type="GeneID" id="41944"/>
<dbReference type="KEGG" id="dme:Dmel_CG3992"/>
<dbReference type="AGR" id="FB:FBgn0003507"/>
<dbReference type="CTD" id="41944"/>
<dbReference type="FlyBase" id="FBgn0003507">
    <property type="gene designation" value="srp"/>
</dbReference>
<dbReference type="VEuPathDB" id="VectorBase:FBgn0003507"/>
<dbReference type="eggNOG" id="KOG1601">
    <property type="taxonomic scope" value="Eukaryota"/>
</dbReference>
<dbReference type="GeneTree" id="ENSGT00940000169284"/>
<dbReference type="InParanoid" id="P52172"/>
<dbReference type="OMA" id="SQAHTSV"/>
<dbReference type="OrthoDB" id="2162994at2759"/>
<dbReference type="PhylomeDB" id="P52172"/>
<dbReference type="Reactome" id="R-DME-5683826">
    <property type="pathway name" value="Surfactant metabolism"/>
</dbReference>
<dbReference type="Reactome" id="R-DME-8936459">
    <property type="pathway name" value="RUNX1 regulates genes involved in megakaryocyte differentiation and platelet function"/>
</dbReference>
<dbReference type="Reactome" id="R-DME-8939236">
    <property type="pathway name" value="RUNX1 regulates transcription of genes involved in differentiation of HSCs"/>
</dbReference>
<dbReference type="Reactome" id="R-DME-983231">
    <property type="pathway name" value="Factors involved in megakaryocyte development and platelet production"/>
</dbReference>
<dbReference type="SignaLink" id="P52172"/>
<dbReference type="BioGRID-ORCS" id="41944">
    <property type="hits" value="2 hits in 3 CRISPR screens"/>
</dbReference>
<dbReference type="ChiTaRS" id="srp">
    <property type="organism name" value="fly"/>
</dbReference>
<dbReference type="GenomeRNAi" id="41944"/>
<dbReference type="PRO" id="PR:P52172"/>
<dbReference type="Proteomes" id="UP000000803">
    <property type="component" value="Chromosome 3R"/>
</dbReference>
<dbReference type="Bgee" id="FBgn0003507">
    <property type="expression patterns" value="Expressed in dorsal appendage forming follicle cell in ovary and 135 other cell types or tissues"/>
</dbReference>
<dbReference type="ExpressionAtlas" id="P52172">
    <property type="expression patterns" value="baseline and differential"/>
</dbReference>
<dbReference type="GO" id="GO:0005634">
    <property type="term" value="C:nucleus"/>
    <property type="evidence" value="ECO:0000314"/>
    <property type="project" value="FlyBase"/>
</dbReference>
<dbReference type="GO" id="GO:0090575">
    <property type="term" value="C:RNA polymerase II transcription regulator complex"/>
    <property type="evidence" value="ECO:0000353"/>
    <property type="project" value="FlyBase"/>
</dbReference>
<dbReference type="GO" id="GO:0003677">
    <property type="term" value="F:DNA binding"/>
    <property type="evidence" value="ECO:0000314"/>
    <property type="project" value="FlyBase"/>
</dbReference>
<dbReference type="GO" id="GO:0001228">
    <property type="term" value="F:DNA-binding transcription activator activity, RNA polymerase II-specific"/>
    <property type="evidence" value="ECO:0000314"/>
    <property type="project" value="FlyBase"/>
</dbReference>
<dbReference type="GO" id="GO:0003700">
    <property type="term" value="F:DNA-binding transcription factor activity"/>
    <property type="evidence" value="ECO:0000250"/>
    <property type="project" value="FlyBase"/>
</dbReference>
<dbReference type="GO" id="GO:0000981">
    <property type="term" value="F:DNA-binding transcription factor activity, RNA polymerase II-specific"/>
    <property type="evidence" value="ECO:0000318"/>
    <property type="project" value="GO_Central"/>
</dbReference>
<dbReference type="GO" id="GO:0000978">
    <property type="term" value="F:RNA polymerase II cis-regulatory region sequence-specific DNA binding"/>
    <property type="evidence" value="ECO:0000314"/>
    <property type="project" value="FlyBase"/>
</dbReference>
<dbReference type="GO" id="GO:0043565">
    <property type="term" value="F:sequence-specific DNA binding"/>
    <property type="evidence" value="ECO:0000314"/>
    <property type="project" value="FlyBase"/>
</dbReference>
<dbReference type="GO" id="GO:0000976">
    <property type="term" value="F:transcription cis-regulatory region binding"/>
    <property type="evidence" value="ECO:0000314"/>
    <property type="project" value="FlyBase"/>
</dbReference>
<dbReference type="GO" id="GO:0001223">
    <property type="term" value="F:transcription coactivator binding"/>
    <property type="evidence" value="ECO:0000353"/>
    <property type="project" value="FlyBase"/>
</dbReference>
<dbReference type="GO" id="GO:0008270">
    <property type="term" value="F:zinc ion binding"/>
    <property type="evidence" value="ECO:0007669"/>
    <property type="project" value="UniProtKB-KW"/>
</dbReference>
<dbReference type="GO" id="GO:0046665">
    <property type="term" value="P:amnioserosa maintenance"/>
    <property type="evidence" value="ECO:0000315"/>
    <property type="project" value="FlyBase"/>
</dbReference>
<dbReference type="GO" id="GO:0045165">
    <property type="term" value="P:cell fate commitment"/>
    <property type="evidence" value="ECO:0000318"/>
    <property type="project" value="GO_Central"/>
</dbReference>
<dbReference type="GO" id="GO:0042688">
    <property type="term" value="P:crystal cell differentiation"/>
    <property type="evidence" value="ECO:0000304"/>
    <property type="project" value="FlyBase"/>
</dbReference>
<dbReference type="GO" id="GO:0007391">
    <property type="term" value="P:dorsal closure"/>
    <property type="evidence" value="ECO:0000304"/>
    <property type="project" value="FlyBase"/>
</dbReference>
<dbReference type="GO" id="GO:0035050">
    <property type="term" value="P:embryonic heart tube development"/>
    <property type="evidence" value="ECO:0000315"/>
    <property type="project" value="FlyBase"/>
</dbReference>
<dbReference type="GO" id="GO:0035162">
    <property type="term" value="P:embryonic hemopoiesis"/>
    <property type="evidence" value="ECO:0000315"/>
    <property type="project" value="FlyBase"/>
</dbReference>
<dbReference type="GO" id="GO:0007492">
    <property type="term" value="P:endoderm development"/>
    <property type="evidence" value="ECO:0000304"/>
    <property type="project" value="FlyBase"/>
</dbReference>
<dbReference type="GO" id="GO:0001706">
    <property type="term" value="P:endoderm formation"/>
    <property type="evidence" value="ECO:0000304"/>
    <property type="project" value="FlyBase"/>
</dbReference>
<dbReference type="GO" id="GO:0007503">
    <property type="term" value="P:fat body development"/>
    <property type="evidence" value="ECO:0000270"/>
    <property type="project" value="FlyBase"/>
</dbReference>
<dbReference type="GO" id="GO:0008354">
    <property type="term" value="P:germ cell migration"/>
    <property type="evidence" value="ECO:0000315"/>
    <property type="project" value="FlyBase"/>
</dbReference>
<dbReference type="GO" id="GO:0007390">
    <property type="term" value="P:germ-band shortening"/>
    <property type="evidence" value="ECO:0000315"/>
    <property type="project" value="FlyBase"/>
</dbReference>
<dbReference type="GO" id="GO:0007516">
    <property type="term" value="P:hemocyte development"/>
    <property type="evidence" value="ECO:0000315"/>
    <property type="project" value="FlyBase"/>
</dbReference>
<dbReference type="GO" id="GO:0030097">
    <property type="term" value="P:hemopoiesis"/>
    <property type="evidence" value="ECO:0000315"/>
    <property type="project" value="FlyBase"/>
</dbReference>
<dbReference type="GO" id="GO:0035167">
    <property type="term" value="P:larval lymph gland hemopoiesis"/>
    <property type="evidence" value="ECO:0000315"/>
    <property type="project" value="FlyBase"/>
</dbReference>
<dbReference type="GO" id="GO:0048542">
    <property type="term" value="P:lymph gland development"/>
    <property type="evidence" value="ECO:0000315"/>
    <property type="project" value="FlyBase"/>
</dbReference>
<dbReference type="GO" id="GO:0001710">
    <property type="term" value="P:mesodermal cell fate commitment"/>
    <property type="evidence" value="ECO:0000315"/>
    <property type="project" value="FlyBase"/>
</dbReference>
<dbReference type="GO" id="GO:0007494">
    <property type="term" value="P:midgut development"/>
    <property type="evidence" value="ECO:0000304"/>
    <property type="project" value="FlyBase"/>
</dbReference>
<dbReference type="GO" id="GO:0042690">
    <property type="term" value="P:negative regulation of crystal cell differentiation"/>
    <property type="evidence" value="ECO:0000304"/>
    <property type="project" value="FlyBase"/>
</dbReference>
<dbReference type="GO" id="GO:0000122">
    <property type="term" value="P:negative regulation of transcription by RNA polymerase II"/>
    <property type="evidence" value="ECO:0000318"/>
    <property type="project" value="GO_Central"/>
</dbReference>
<dbReference type="GO" id="GO:2000427">
    <property type="term" value="P:positive regulation of apoptotic cell clearance"/>
    <property type="evidence" value="ECO:0000315"/>
    <property type="project" value="FlyBase"/>
</dbReference>
<dbReference type="GO" id="GO:0045893">
    <property type="term" value="P:positive regulation of DNA-templated transcription"/>
    <property type="evidence" value="ECO:0000314"/>
    <property type="project" value="FlyBase"/>
</dbReference>
<dbReference type="GO" id="GO:0016239">
    <property type="term" value="P:positive regulation of macroautophagy"/>
    <property type="evidence" value="ECO:0000315"/>
    <property type="project" value="FlyBase"/>
</dbReference>
<dbReference type="GO" id="GO:0045944">
    <property type="term" value="P:positive regulation of transcription by RNA polymerase II"/>
    <property type="evidence" value="ECO:0000314"/>
    <property type="project" value="FlyBase"/>
</dbReference>
<dbReference type="GO" id="GO:0007435">
    <property type="term" value="P:salivary gland morphogenesis"/>
    <property type="evidence" value="ECO:0000315"/>
    <property type="project" value="FlyBase"/>
</dbReference>
<dbReference type="CDD" id="cd00202">
    <property type="entry name" value="ZnF_GATA"/>
    <property type="match status" value="1"/>
</dbReference>
<dbReference type="FunFam" id="3.30.50.10:FF:000032">
    <property type="entry name" value="Transcription factor GATA-3"/>
    <property type="match status" value="1"/>
</dbReference>
<dbReference type="Gene3D" id="3.30.50.10">
    <property type="entry name" value="Erythroid Transcription Factor GATA-1, subunit A"/>
    <property type="match status" value="1"/>
</dbReference>
<dbReference type="InterPro" id="IPR039355">
    <property type="entry name" value="Transcription_factor_GATA"/>
</dbReference>
<dbReference type="InterPro" id="IPR000679">
    <property type="entry name" value="Znf_GATA"/>
</dbReference>
<dbReference type="InterPro" id="IPR013088">
    <property type="entry name" value="Znf_NHR/GATA"/>
</dbReference>
<dbReference type="PANTHER" id="PTHR10071:SF281">
    <property type="entry name" value="BOX A-BINDING FACTOR-RELATED"/>
    <property type="match status" value="1"/>
</dbReference>
<dbReference type="PANTHER" id="PTHR10071">
    <property type="entry name" value="TRANSCRIPTION FACTOR GATA FAMILY MEMBER"/>
    <property type="match status" value="1"/>
</dbReference>
<dbReference type="Pfam" id="PF00320">
    <property type="entry name" value="GATA"/>
    <property type="match status" value="1"/>
</dbReference>
<dbReference type="PRINTS" id="PR00619">
    <property type="entry name" value="GATAZNFINGER"/>
</dbReference>
<dbReference type="SMART" id="SM00401">
    <property type="entry name" value="ZnF_GATA"/>
    <property type="match status" value="1"/>
</dbReference>
<dbReference type="SUPFAM" id="SSF57716">
    <property type="entry name" value="Glucocorticoid receptor-like (DNA-binding domain)"/>
    <property type="match status" value="1"/>
</dbReference>
<dbReference type="PROSITE" id="PS00344">
    <property type="entry name" value="GATA_ZN_FINGER_1"/>
    <property type="match status" value="1"/>
</dbReference>
<dbReference type="PROSITE" id="PS50114">
    <property type="entry name" value="GATA_ZN_FINGER_2"/>
    <property type="match status" value="1"/>
</dbReference>
<feature type="chain" id="PRO_0000083461" description="Box A-binding factor">
    <location>
        <begin position="1"/>
        <end position="1264"/>
    </location>
</feature>
<feature type="zinc finger region" description="GATA-type" evidence="1">
    <location>
        <begin position="803"/>
        <end position="827"/>
    </location>
</feature>
<feature type="region of interest" description="Disordered" evidence="2">
    <location>
        <begin position="1"/>
        <end position="25"/>
    </location>
</feature>
<feature type="region of interest" description="Disordered" evidence="2">
    <location>
        <begin position="161"/>
        <end position="200"/>
    </location>
</feature>
<feature type="region of interest" description="Disordered" evidence="2">
    <location>
        <begin position="234"/>
        <end position="253"/>
    </location>
</feature>
<feature type="region of interest" description="Disordered" evidence="2">
    <location>
        <begin position="405"/>
        <end position="463"/>
    </location>
</feature>
<feature type="region of interest" description="Disordered" evidence="2">
    <location>
        <begin position="523"/>
        <end position="585"/>
    </location>
</feature>
<feature type="region of interest" description="Disordered" evidence="2">
    <location>
        <begin position="599"/>
        <end position="627"/>
    </location>
</feature>
<feature type="region of interest" description="Disordered" evidence="2">
    <location>
        <begin position="841"/>
        <end position="867"/>
    </location>
</feature>
<feature type="region of interest" description="Disordered" evidence="2">
    <location>
        <begin position="899"/>
        <end position="1048"/>
    </location>
</feature>
<feature type="region of interest" description="Disordered" evidence="2">
    <location>
        <begin position="1181"/>
        <end position="1202"/>
    </location>
</feature>
<feature type="compositionally biased region" description="Basic and acidic residues" evidence="2">
    <location>
        <begin position="1"/>
        <end position="11"/>
    </location>
</feature>
<feature type="compositionally biased region" description="Gly residues" evidence="2">
    <location>
        <begin position="16"/>
        <end position="25"/>
    </location>
</feature>
<feature type="compositionally biased region" description="Low complexity" evidence="2">
    <location>
        <begin position="161"/>
        <end position="171"/>
    </location>
</feature>
<feature type="compositionally biased region" description="Polar residues" evidence="2">
    <location>
        <begin position="189"/>
        <end position="198"/>
    </location>
</feature>
<feature type="compositionally biased region" description="Basic residues" evidence="2">
    <location>
        <begin position="409"/>
        <end position="421"/>
    </location>
</feature>
<feature type="compositionally biased region" description="Low complexity" evidence="2">
    <location>
        <begin position="422"/>
        <end position="438"/>
    </location>
</feature>
<feature type="compositionally biased region" description="Low complexity" evidence="2">
    <location>
        <begin position="447"/>
        <end position="459"/>
    </location>
</feature>
<feature type="compositionally biased region" description="Low complexity" evidence="2">
    <location>
        <begin position="523"/>
        <end position="554"/>
    </location>
</feature>
<feature type="compositionally biased region" description="Basic residues" evidence="2">
    <location>
        <begin position="555"/>
        <end position="564"/>
    </location>
</feature>
<feature type="compositionally biased region" description="Low complexity" evidence="2">
    <location>
        <begin position="565"/>
        <end position="585"/>
    </location>
</feature>
<feature type="compositionally biased region" description="Low complexity" evidence="2">
    <location>
        <begin position="599"/>
        <end position="614"/>
    </location>
</feature>
<feature type="compositionally biased region" description="Low complexity" evidence="2">
    <location>
        <begin position="909"/>
        <end position="950"/>
    </location>
</feature>
<feature type="compositionally biased region" description="Low complexity" evidence="2">
    <location>
        <begin position="985"/>
        <end position="1007"/>
    </location>
</feature>
<feature type="compositionally biased region" description="Polar residues" evidence="2">
    <location>
        <begin position="1008"/>
        <end position="1023"/>
    </location>
</feature>
<feature type="compositionally biased region" description="Low complexity" evidence="2">
    <location>
        <begin position="1024"/>
        <end position="1048"/>
    </location>
</feature>
<feature type="compositionally biased region" description="Low complexity" evidence="2">
    <location>
        <begin position="1185"/>
        <end position="1200"/>
    </location>
</feature>
<feature type="modified residue" description="Phosphoserine" evidence="3">
    <location>
        <position position="1208"/>
    </location>
</feature>
<feature type="modified residue" description="Phosphoserine" evidence="3">
    <location>
        <position position="1210"/>
    </location>
</feature>
<feature type="splice variant" id="VSP_015186" description="In isoform 3." evidence="5">
    <location>
        <begin position="1"/>
        <end position="518"/>
    </location>
</feature>
<feature type="splice variant" id="VSP_015187" description="In isoform 2." evidence="6">
    <original>MAAESGGDFYKPNSFNVGGGGRSKANTSGAASSYSCPGSNATSAATSAVASGTAATAATTLDEHVSRANS</original>
    <variation>TLFDADYFTEGRECVNCGAISTPLWRRDNTGHYLCNACGLYMKMNGMNRPLIKQP</variation>
    <location>
        <begin position="721"/>
        <end position="790"/>
    </location>
</feature>
<feature type="sequence conflict" description="In Ref. 4; CAA68943." evidence="6" ref="4">
    <original>V</original>
    <variation>A</variation>
    <location>
        <position position="138"/>
    </location>
</feature>
<feature type="sequence conflict" description="In Ref. 4; CAA68943." evidence="6" ref="4">
    <original>T</original>
    <variation>P</variation>
    <location>
        <position position="161"/>
    </location>
</feature>
<feature type="sequence conflict" description="In Ref. 4; CAA68943." evidence="6" ref="4">
    <original>N</original>
    <variation>I</variation>
    <location>
        <position position="181"/>
    </location>
</feature>
<feature type="sequence conflict" description="In Ref. 4; CAA68943." evidence="6" ref="4">
    <original>A</original>
    <variation>T</variation>
    <location>
        <position position="274"/>
    </location>
</feature>
<feature type="sequence conflict" description="In Ref. 4; CAA68943." evidence="6" ref="4">
    <original>A</original>
    <variation>T</variation>
    <location>
        <position position="278"/>
    </location>
</feature>
<feature type="sequence conflict" description="In Ref. 4; CAA68943." evidence="6" ref="4">
    <original>A</original>
    <variation>T</variation>
    <location>
        <position position="282"/>
    </location>
</feature>
<feature type="sequence conflict" description="In Ref. 4; CAA68943." evidence="6" ref="4">
    <original>A</original>
    <variation>T</variation>
    <location>
        <position position="346"/>
    </location>
</feature>
<feature type="sequence conflict" description="In Ref. 6; CAA53807." evidence="6" ref="6">
    <original>HH</original>
    <variation>QQHQ</variation>
    <location>
        <begin position="412"/>
        <end position="413"/>
    </location>
</feature>
<feature type="sequence conflict" description="In Ref. 4; CAA68943 and 6; CAA53807." evidence="6" ref="4 6">
    <original>L</original>
    <variation>V</variation>
    <location>
        <position position="931"/>
    </location>
</feature>
<feature type="sequence conflict" description="In Ref. 4; CAA68943 and 6; CAA53807." evidence="6" ref="4 6">
    <original>NSSIF</original>
    <variation>SSLFN</variation>
    <location>
        <begin position="1031"/>
        <end position="1035"/>
    </location>
</feature>
<feature type="sequence conflict" description="In Ref. 4; CAA68943 and 6; CAA53807." evidence="6" ref="4 6">
    <original>G</original>
    <variation>D</variation>
    <location>
        <position position="1069"/>
    </location>
</feature>
<feature type="sequence conflict" description="In Ref. 4; CAA68943 and 6; CAA53807." evidence="6" ref="4 6">
    <original>LQ</original>
    <variation>PE</variation>
    <location>
        <begin position="1230"/>
        <end position="1231"/>
    </location>
</feature>
<feature type="sequence conflict" description="In Ref. 4; CAA68943 and 6; CAA53807." evidence="6" ref="4 6">
    <original>A</original>
    <variation>S</variation>
    <location>
        <position position="1236"/>
    </location>
</feature>
<comment type="function">
    <text evidence="4">May function as a transcriptional activator protein and may play a key role in the organogenesis of the fat body. Binds a sequence element (5'-[TA]GATAA-3') found in the larval promoters of all known alcohol dehydrogenase (ADH) genes. Acts as a homeotic gene downstream of the terminal gap gene HKB to promote morphogenesis and differentiation of anterior and posterior midgut. Together with transcriptional cofactor Bfc directly binds the promoter of phagocytic receptor crq/croquemort to upregulate its expression and stimulate efferocytosis in response to apoptotic cells, including during embryogenesis (PubMed:34860835).</text>
</comment>
<comment type="subunit">
    <text evidence="4">Interacts (via GATA-type Zn-finger domain) with Bfc; this interaction enhances srp binding to the promoter of crq/croquemort.</text>
</comment>
<comment type="subcellular location">
    <subcellularLocation>
        <location evidence="4">Nucleus</location>
    </subcellularLocation>
</comment>
<comment type="alternative products">
    <event type="alternative splicing"/>
    <isoform>
        <id>P52172-1</id>
        <name>1</name>
        <name>A</name>
        <sequence type="displayed"/>
    </isoform>
    <isoform>
        <id>P52172-2</id>
        <name>2</name>
        <name>B</name>
        <sequence type="described" ref="VSP_015187"/>
    </isoform>
    <isoform>
        <id>P52172-3</id>
        <name>3</name>
        <sequence type="described" ref="VSP_015186"/>
    </isoform>
</comment>
<comment type="developmental stage">
    <text>Initially observed in the analgen of the anterior and posterior midgut and the cephalic mesoderm. It is found in both the endodermal and mesodermal germ layers and for a brief period during gastrulation it is expressed in the amnioserosa. During germ band retraction it becomes restricted to the fat body.</text>
</comment>
<comment type="domain">
    <text evidence="4 6">The GATA-type Zn-finger domain is required for binding DNA and interacting with Bfc (PubMed:34860835). Isoform 2 differs from isoform 1 in that it has an additional zinc finger domain. It is unknown if both zinc fingers are required for DNA binding or interaction with Bfc (Probable).</text>
</comment>
<comment type="disruption phenotype">
    <text evidence="4">Reduced levels of phagocytic receptor crq/croquemort in macrophages during embryogenesis stage 13.</text>
</comment>
<comment type="sequence caution" evidence="6">
    <conflict type="erroneous initiation">
        <sequence resource="EMBL-CDS" id="AAL39968"/>
    </conflict>
    <text>Truncated N-terminus.</text>
</comment>
<comment type="sequence caution" evidence="6">
    <conflict type="frameshift">
        <sequence resource="EMBL-CDS" id="CAA53807"/>
    </conflict>
</comment>
<comment type="sequence caution" evidence="6">
    <conflict type="frameshift">
        <sequence resource="EMBL-CDS" id="CAA68943"/>
    </conflict>
</comment>
<sequence>MTKTTKPKEKAAAGGAVIGSGSGLGSVTKAGGGSLLSNAADSKIRTAKSNNNKRQAGRAATALAATTTASALAATTTAGATGSNAAANETEIAIETENGEAATPTAAATAAAANLSSLESARSQALTSVVSETARQAVTTANASATSTSTVTAATEIATATASDTAATSEAAIDDDPSAINTNNNNNNSKAQNDASESVKTKVISYHQSEDQQQQQQQQAQIYEQQQQFLSQQLISHHQQEQHQQAQQQQHQQVVQEQHQASWLAYDLTSGSAAAAAAAAAAASHPHLFGQFSYPPSHHTPTQLYEHYPSTDPIMRNNFAFYSVYTGGGGGVGVGMTSHEHLAAAAAAAAAVAQGTTPNIDEVIQDTLKDECFEDGHSTDYHVLTSVSDMHTLKDSSPYALTHEQLHQQQHHHQQQLHHHQQQQQQLYHQQQQQQQQQQHHHHHNNSTSSAGGDSPSSSHALSTLQSFTQLTSATQRDSLSPENDAYFAAAQLGSSLQNSSVYAGSLLTQTANGIQYGMQSPNQTQAHLQQQHHQQQQQQHQQHQQQQLQQQQQQHHHNQHQHHNSSSSSPGPAGLHHSSSSAATAAAVAAATAAVNGHNSSLEDGYGSPRSSHSGGGGGGTLPAFQRIAYPNSGSVERYAPITNYRGQNDTWFDPLSYATSSSGQAQLGVGVGAGVVSNVIRNGRAISAANAAAAAAADGTTGRVDPGTFLSASASLSAMAAESGGDFYKPNSFNVGGGGRSKANTSGAASSYSCPGSNATSAATSAVASGTAATAATTLDEHVSRANSRRLSASKRAGLSCSNCHTTHTSLWRRNPAGEPVCNACGLYYKLHSVPRPLTMKKDTIQKRKRKPKGTKSEKSKSKSKNALNAIMESGSLVTNCHNVGVVLDSSQMDVNDDMKPQLDLKPYNSYSSQPQQQLPQYQQQQQLLMADQHSSAASSPHSMGSTSLSPSAMSHQHQTHPHQQQQQQLCSGLDMSPNSNYQMSPLNMQQHQQQQSCSMQHSPSTPTSIFNTPSPTHQLHNNNNNNNNSSIFNNNNNNNSSSNENNNKLIQKYLQAQQLSSSSNSGSTSDHQLLAQLLPNSITAAAAAAAAAAAAAIKTEALSLTSQANCSTASAGLMVTSTPTTASSTLSSLSHSNIISLQNPYHQAGMTLCKPTRPSPPYYLTPEEDEQPALIKMEEMDQSQQQQQQQQHQQQQHGEIMLSRSASLDEHYELAAFQRHQQQQQQLQQQTAALLGQHEQHVTNYAMHKFGVDRETVVKME</sequence>
<reference key="1">
    <citation type="journal article" date="2000" name="Science">
        <title>The genome sequence of Drosophila melanogaster.</title>
        <authorList>
            <person name="Adams M.D."/>
            <person name="Celniker S.E."/>
            <person name="Holt R.A."/>
            <person name="Evans C.A."/>
            <person name="Gocayne J.D."/>
            <person name="Amanatides P.G."/>
            <person name="Scherer S.E."/>
            <person name="Li P.W."/>
            <person name="Hoskins R.A."/>
            <person name="Galle R.F."/>
            <person name="George R.A."/>
            <person name="Lewis S.E."/>
            <person name="Richards S."/>
            <person name="Ashburner M."/>
            <person name="Henderson S.N."/>
            <person name="Sutton G.G."/>
            <person name="Wortman J.R."/>
            <person name="Yandell M.D."/>
            <person name="Zhang Q."/>
            <person name="Chen L.X."/>
            <person name="Brandon R.C."/>
            <person name="Rogers Y.-H.C."/>
            <person name="Blazej R.G."/>
            <person name="Champe M."/>
            <person name="Pfeiffer B.D."/>
            <person name="Wan K.H."/>
            <person name="Doyle C."/>
            <person name="Baxter E.G."/>
            <person name="Helt G."/>
            <person name="Nelson C.R."/>
            <person name="Miklos G.L.G."/>
            <person name="Abril J.F."/>
            <person name="Agbayani A."/>
            <person name="An H.-J."/>
            <person name="Andrews-Pfannkoch C."/>
            <person name="Baldwin D."/>
            <person name="Ballew R.M."/>
            <person name="Basu A."/>
            <person name="Baxendale J."/>
            <person name="Bayraktaroglu L."/>
            <person name="Beasley E.M."/>
            <person name="Beeson K.Y."/>
            <person name="Benos P.V."/>
            <person name="Berman B.P."/>
            <person name="Bhandari D."/>
            <person name="Bolshakov S."/>
            <person name="Borkova D."/>
            <person name="Botchan M.R."/>
            <person name="Bouck J."/>
            <person name="Brokstein P."/>
            <person name="Brottier P."/>
            <person name="Burtis K.C."/>
            <person name="Busam D.A."/>
            <person name="Butler H."/>
            <person name="Cadieu E."/>
            <person name="Center A."/>
            <person name="Chandra I."/>
            <person name="Cherry J.M."/>
            <person name="Cawley S."/>
            <person name="Dahlke C."/>
            <person name="Davenport L.B."/>
            <person name="Davies P."/>
            <person name="de Pablos B."/>
            <person name="Delcher A."/>
            <person name="Deng Z."/>
            <person name="Mays A.D."/>
            <person name="Dew I."/>
            <person name="Dietz S.M."/>
            <person name="Dodson K."/>
            <person name="Doup L.E."/>
            <person name="Downes M."/>
            <person name="Dugan-Rocha S."/>
            <person name="Dunkov B.C."/>
            <person name="Dunn P."/>
            <person name="Durbin K.J."/>
            <person name="Evangelista C.C."/>
            <person name="Ferraz C."/>
            <person name="Ferriera S."/>
            <person name="Fleischmann W."/>
            <person name="Fosler C."/>
            <person name="Gabrielian A.E."/>
            <person name="Garg N.S."/>
            <person name="Gelbart W.M."/>
            <person name="Glasser K."/>
            <person name="Glodek A."/>
            <person name="Gong F."/>
            <person name="Gorrell J.H."/>
            <person name="Gu Z."/>
            <person name="Guan P."/>
            <person name="Harris M."/>
            <person name="Harris N.L."/>
            <person name="Harvey D.A."/>
            <person name="Heiman T.J."/>
            <person name="Hernandez J.R."/>
            <person name="Houck J."/>
            <person name="Hostin D."/>
            <person name="Houston K.A."/>
            <person name="Howland T.J."/>
            <person name="Wei M.-H."/>
            <person name="Ibegwam C."/>
            <person name="Jalali M."/>
            <person name="Kalush F."/>
            <person name="Karpen G.H."/>
            <person name="Ke Z."/>
            <person name="Kennison J.A."/>
            <person name="Ketchum K.A."/>
            <person name="Kimmel B.E."/>
            <person name="Kodira C.D."/>
            <person name="Kraft C.L."/>
            <person name="Kravitz S."/>
            <person name="Kulp D."/>
            <person name="Lai Z."/>
            <person name="Lasko P."/>
            <person name="Lei Y."/>
            <person name="Levitsky A.A."/>
            <person name="Li J.H."/>
            <person name="Li Z."/>
            <person name="Liang Y."/>
            <person name="Lin X."/>
            <person name="Liu X."/>
            <person name="Mattei B."/>
            <person name="McIntosh T.C."/>
            <person name="McLeod M.P."/>
            <person name="McPherson D."/>
            <person name="Merkulov G."/>
            <person name="Milshina N.V."/>
            <person name="Mobarry C."/>
            <person name="Morris J."/>
            <person name="Moshrefi A."/>
            <person name="Mount S.M."/>
            <person name="Moy M."/>
            <person name="Murphy B."/>
            <person name="Murphy L."/>
            <person name="Muzny D.M."/>
            <person name="Nelson D.L."/>
            <person name="Nelson D.R."/>
            <person name="Nelson K.A."/>
            <person name="Nixon K."/>
            <person name="Nusskern D.R."/>
            <person name="Pacleb J.M."/>
            <person name="Palazzolo M."/>
            <person name="Pittman G.S."/>
            <person name="Pan S."/>
            <person name="Pollard J."/>
            <person name="Puri V."/>
            <person name="Reese M.G."/>
            <person name="Reinert K."/>
            <person name="Remington K."/>
            <person name="Saunders R.D.C."/>
            <person name="Scheeler F."/>
            <person name="Shen H."/>
            <person name="Shue B.C."/>
            <person name="Siden-Kiamos I."/>
            <person name="Simpson M."/>
            <person name="Skupski M.P."/>
            <person name="Smith T.J."/>
            <person name="Spier E."/>
            <person name="Spradling A.C."/>
            <person name="Stapleton M."/>
            <person name="Strong R."/>
            <person name="Sun E."/>
            <person name="Svirskas R."/>
            <person name="Tector C."/>
            <person name="Turner R."/>
            <person name="Venter E."/>
            <person name="Wang A.H."/>
            <person name="Wang X."/>
            <person name="Wang Z.-Y."/>
            <person name="Wassarman D.A."/>
            <person name="Weinstock G.M."/>
            <person name="Weissenbach J."/>
            <person name="Williams S.M."/>
            <person name="Woodage T."/>
            <person name="Worley K.C."/>
            <person name="Wu D."/>
            <person name="Yang S."/>
            <person name="Yao Q.A."/>
            <person name="Ye J."/>
            <person name="Yeh R.-F."/>
            <person name="Zaveri J.S."/>
            <person name="Zhan M."/>
            <person name="Zhang G."/>
            <person name="Zhao Q."/>
            <person name="Zheng L."/>
            <person name="Zheng X.H."/>
            <person name="Zhong F.N."/>
            <person name="Zhong W."/>
            <person name="Zhou X."/>
            <person name="Zhu S.C."/>
            <person name="Zhu X."/>
            <person name="Smith H.O."/>
            <person name="Gibbs R.A."/>
            <person name="Myers E.W."/>
            <person name="Rubin G.M."/>
            <person name="Venter J.C."/>
        </authorList>
    </citation>
    <scope>NUCLEOTIDE SEQUENCE [LARGE SCALE GENOMIC DNA]</scope>
    <source>
        <strain>Berkeley</strain>
    </source>
</reference>
<reference key="2">
    <citation type="journal article" date="2002" name="Genome Biol.">
        <title>Annotation of the Drosophila melanogaster euchromatic genome: a systematic review.</title>
        <authorList>
            <person name="Misra S."/>
            <person name="Crosby M.A."/>
            <person name="Mungall C.J."/>
            <person name="Matthews B.B."/>
            <person name="Campbell K.S."/>
            <person name="Hradecky P."/>
            <person name="Huang Y."/>
            <person name="Kaminker J.S."/>
            <person name="Millburn G.H."/>
            <person name="Prochnik S.E."/>
            <person name="Smith C.D."/>
            <person name="Tupy J.L."/>
            <person name="Whitfield E.J."/>
            <person name="Bayraktaroglu L."/>
            <person name="Berman B.P."/>
            <person name="Bettencourt B.R."/>
            <person name="Celniker S.E."/>
            <person name="de Grey A.D.N.J."/>
            <person name="Drysdale R.A."/>
            <person name="Harris N.L."/>
            <person name="Richter J."/>
            <person name="Russo S."/>
            <person name="Schroeder A.J."/>
            <person name="Shu S.Q."/>
            <person name="Stapleton M."/>
            <person name="Yamada C."/>
            <person name="Ashburner M."/>
            <person name="Gelbart W.M."/>
            <person name="Rubin G.M."/>
            <person name="Lewis S.E."/>
        </authorList>
    </citation>
    <scope>GENOME REANNOTATION</scope>
    <scope>ALTERNATIVE SPLICING</scope>
    <source>
        <strain>Berkeley</strain>
    </source>
</reference>
<reference key="3">
    <citation type="submission" date="2004-02" db="EMBL/GenBank/DDBJ databases">
        <authorList>
            <person name="Stapleton M."/>
            <person name="Carlson J.W."/>
            <person name="Chavez C."/>
            <person name="Frise E."/>
            <person name="George R.A."/>
            <person name="Pacleb J.M."/>
            <person name="Park S."/>
            <person name="Wan K.H."/>
            <person name="Yu C."/>
            <person name="Rubin G.M."/>
            <person name="Celniker S.E."/>
        </authorList>
    </citation>
    <scope>NUCLEOTIDE SEQUENCE [LARGE SCALE MRNA] (ISOFORM 3)</scope>
    <source>
        <strain>Berkeley</strain>
        <tissue>Embryo</tissue>
    </source>
</reference>
<reference key="4">
    <citation type="journal article" date="1996" name="Development">
        <title>A molecular aspect of hematopoiesis and endoderm development common to vertebrates and Drosophila.</title>
        <authorList>
            <person name="Rehorn K.-P."/>
            <person name="Thelen H."/>
            <person name="Michelson A.M."/>
            <person name="Reuter R."/>
        </authorList>
    </citation>
    <scope>NUCLEOTIDE SEQUENCE [MRNA] OF 127-1264 (ISOFORM 1)</scope>
</reference>
<reference key="5">
    <citation type="journal article" date="2002" name="Genome Biol.">
        <title>A Drosophila full-length cDNA resource.</title>
        <authorList>
            <person name="Stapleton M."/>
            <person name="Carlson J.W."/>
            <person name="Brokstein P."/>
            <person name="Yu C."/>
            <person name="Champe M."/>
            <person name="George R.A."/>
            <person name="Guarin H."/>
            <person name="Kronmiller B."/>
            <person name="Pacleb J.M."/>
            <person name="Park S."/>
            <person name="Wan K.H."/>
            <person name="Rubin G.M."/>
            <person name="Celniker S.E."/>
        </authorList>
    </citation>
    <scope>NUCLEOTIDE SEQUENCE [LARGE SCALE MRNA] OF 271-1264 (ISOFORM 1)</scope>
    <source>
        <strain>Berkeley</strain>
        <tissue>Embryo</tissue>
    </source>
</reference>
<reference key="6">
    <citation type="journal article" date="1993" name="Development">
        <title>A Drosophila GATA family member that binds to Adh regulatory sequences is expressed in the developing fat body.</title>
        <authorList>
            <person name="Abel T."/>
            <person name="Michelson A.M."/>
            <person name="Maniatis T."/>
        </authorList>
    </citation>
    <scope>NUCLEOTIDE SEQUENCE [MRNA] OF 377-1264</scope>
</reference>
<reference key="7">
    <citation type="journal article" date="2008" name="J. Proteome Res.">
        <title>Phosphoproteome analysis of Drosophila melanogaster embryos.</title>
        <authorList>
            <person name="Zhai B."/>
            <person name="Villen J."/>
            <person name="Beausoleil S.A."/>
            <person name="Mintseris J."/>
            <person name="Gygi S.P."/>
        </authorList>
    </citation>
    <scope>PHOSPHORYLATION [LARGE SCALE ANALYSIS] AT SER-1208 AND SER-1210</scope>
    <scope>IDENTIFICATION BY MASS SPECTROMETRY</scope>
    <source>
        <tissue>Embryo</tissue>
    </source>
</reference>
<reference key="8">
    <citation type="journal article" date="2021" name="PLoS Genet.">
        <title>bfc, a novel serpent co-factor for the expression of croquemort, regulates efferocytosis in Drosophila melanogaster.</title>
        <authorList>
            <person name="Zheng Q."/>
            <person name="Gao N."/>
            <person name="Sun Q."/>
            <person name="Li X."/>
            <person name="Wang Y."/>
            <person name="Xiao H."/>
        </authorList>
    </citation>
    <scope>FUNCTION</scope>
    <scope>INTERACTION WITH BFC</scope>
    <scope>SUBCELLULAR LOCATION</scope>
    <scope>DOMAIN</scope>
    <scope>DISRUPTION PHENOTYPE</scope>
</reference>